<name>GPAT3_RAT</name>
<organism>
    <name type="scientific">Rattus norvegicus</name>
    <name type="common">Rat</name>
    <dbReference type="NCBI Taxonomy" id="10116"/>
    <lineage>
        <taxon>Eukaryota</taxon>
        <taxon>Metazoa</taxon>
        <taxon>Chordata</taxon>
        <taxon>Craniata</taxon>
        <taxon>Vertebrata</taxon>
        <taxon>Euteleostomi</taxon>
        <taxon>Mammalia</taxon>
        <taxon>Eutheria</taxon>
        <taxon>Euarchontoglires</taxon>
        <taxon>Glires</taxon>
        <taxon>Rodentia</taxon>
        <taxon>Myomorpha</taxon>
        <taxon>Muroidea</taxon>
        <taxon>Muridae</taxon>
        <taxon>Murinae</taxon>
        <taxon>Rattus</taxon>
    </lineage>
</organism>
<proteinExistence type="evidence at protein level"/>
<reference key="1">
    <citation type="journal article" date="2004" name="Genome Res.">
        <title>The status, quality, and expansion of the NIH full-length cDNA project: the Mammalian Gene Collection (MGC).</title>
        <authorList>
            <consortium name="The MGC Project Team"/>
        </authorList>
    </citation>
    <scope>NUCLEOTIDE SEQUENCE [LARGE SCALE MRNA]</scope>
    <source>
        <tissue>Placenta</tissue>
    </source>
</reference>
<reference key="2">
    <citation type="journal article" date="2012" name="Nat. Commun.">
        <title>Quantitative maps of protein phosphorylation sites across 14 different rat organs and tissues.</title>
        <authorList>
            <person name="Lundby A."/>
            <person name="Secher A."/>
            <person name="Lage K."/>
            <person name="Nordsborg N.B."/>
            <person name="Dmytriyev A."/>
            <person name="Lundby C."/>
            <person name="Olsen J.V."/>
        </authorList>
    </citation>
    <scope>PHOSPHORYLATION [LARGE SCALE ANALYSIS] AT SER-68</scope>
    <scope>IDENTIFICATION BY MASS SPECTROMETRY [LARGE SCALE ANALYSIS]</scope>
</reference>
<evidence type="ECO:0000250" key="1">
    <source>
        <dbReference type="UniProtKB" id="Q53EU6"/>
    </source>
</evidence>
<evidence type="ECO:0000250" key="2">
    <source>
        <dbReference type="UniProtKB" id="Q9D517"/>
    </source>
</evidence>
<evidence type="ECO:0000255" key="3"/>
<evidence type="ECO:0000256" key="4">
    <source>
        <dbReference type="SAM" id="MobiDB-lite"/>
    </source>
</evidence>
<evidence type="ECO:0000305" key="5"/>
<evidence type="ECO:0000312" key="6">
    <source>
        <dbReference type="RGD" id="1565703"/>
    </source>
</evidence>
<evidence type="ECO:0007744" key="7">
    <source>
    </source>
</evidence>
<dbReference type="EC" id="2.3.1.15" evidence="1"/>
<dbReference type="EC" id="2.3.1.51" evidence="1"/>
<dbReference type="EMBL" id="BC097362">
    <property type="protein sequence ID" value="AAH97362.1"/>
    <property type="molecule type" value="mRNA"/>
</dbReference>
<dbReference type="RefSeq" id="NP_001020841.1">
    <property type="nucleotide sequence ID" value="NM_001025670.1"/>
</dbReference>
<dbReference type="RefSeq" id="XP_008768241.1">
    <property type="nucleotide sequence ID" value="XM_008770019.4"/>
</dbReference>
<dbReference type="RefSeq" id="XP_008768242.1">
    <property type="nucleotide sequence ID" value="XM_008770020.4"/>
</dbReference>
<dbReference type="RefSeq" id="XP_008768243.1">
    <property type="nucleotide sequence ID" value="XM_008770021.4"/>
</dbReference>
<dbReference type="RefSeq" id="XP_038947761.1">
    <property type="nucleotide sequence ID" value="XM_039091833.2"/>
</dbReference>
<dbReference type="FunCoup" id="Q4V8J4">
    <property type="interactions" value="1242"/>
</dbReference>
<dbReference type="STRING" id="10116.ENSRNOP00000002936"/>
<dbReference type="iPTMnet" id="Q4V8J4"/>
<dbReference type="PhosphoSitePlus" id="Q4V8J4"/>
<dbReference type="jPOST" id="Q4V8J4"/>
<dbReference type="PaxDb" id="10116-ENSRNOP00000002936"/>
<dbReference type="Ensembl" id="ENSRNOT00000002936.7">
    <property type="protein sequence ID" value="ENSRNOP00000002936.5"/>
    <property type="gene ID" value="ENSRNOG00000002159.7"/>
</dbReference>
<dbReference type="GeneID" id="305166"/>
<dbReference type="KEGG" id="rno:305166"/>
<dbReference type="AGR" id="RGD:1565703"/>
<dbReference type="CTD" id="84803"/>
<dbReference type="RGD" id="1565703">
    <property type="gene designation" value="Gpat3"/>
</dbReference>
<dbReference type="eggNOG" id="KOG2898">
    <property type="taxonomic scope" value="Eukaryota"/>
</dbReference>
<dbReference type="GeneTree" id="ENSGT01030000234574"/>
<dbReference type="HOGENOM" id="CLU_031080_0_1_1"/>
<dbReference type="InParanoid" id="Q4V8J4"/>
<dbReference type="OMA" id="PPMVREE"/>
<dbReference type="OrthoDB" id="10051137at2759"/>
<dbReference type="PhylomeDB" id="Q4V8J4"/>
<dbReference type="TreeFam" id="TF315039"/>
<dbReference type="BRENDA" id="2.3.1.15">
    <property type="organism ID" value="5301"/>
</dbReference>
<dbReference type="Reactome" id="R-RNO-1483166">
    <property type="pathway name" value="Synthesis of PA"/>
</dbReference>
<dbReference type="UniPathway" id="UPA00282"/>
<dbReference type="UniPathway" id="UPA00557">
    <property type="reaction ID" value="UER00612"/>
</dbReference>
<dbReference type="PRO" id="PR:Q4V8J4"/>
<dbReference type="Proteomes" id="UP000002494">
    <property type="component" value="Chromosome 14"/>
</dbReference>
<dbReference type="Bgee" id="ENSRNOG00000002159">
    <property type="expression patterns" value="Expressed in duodenum and 19 other cell types or tissues"/>
</dbReference>
<dbReference type="GO" id="GO:0005783">
    <property type="term" value="C:endoplasmic reticulum"/>
    <property type="evidence" value="ECO:0000250"/>
    <property type="project" value="UniProtKB"/>
</dbReference>
<dbReference type="GO" id="GO:0005789">
    <property type="term" value="C:endoplasmic reticulum membrane"/>
    <property type="evidence" value="ECO:0000250"/>
    <property type="project" value="UniProtKB"/>
</dbReference>
<dbReference type="GO" id="GO:0003841">
    <property type="term" value="F:1-acylglycerol-3-phosphate O-acyltransferase activity"/>
    <property type="evidence" value="ECO:0000250"/>
    <property type="project" value="UniProtKB"/>
</dbReference>
<dbReference type="GO" id="GO:0004366">
    <property type="term" value="F:glycerol-3-phosphate O-acyltransferase activity"/>
    <property type="evidence" value="ECO:0000250"/>
    <property type="project" value="UniProtKB"/>
</dbReference>
<dbReference type="GO" id="GO:0016024">
    <property type="term" value="P:CDP-diacylglycerol biosynthetic process"/>
    <property type="evidence" value="ECO:0007669"/>
    <property type="project" value="UniProtKB-UniPathway"/>
</dbReference>
<dbReference type="GO" id="GO:0006072">
    <property type="term" value="P:glycerol-3-phosphate metabolic process"/>
    <property type="evidence" value="ECO:0000266"/>
    <property type="project" value="RGD"/>
</dbReference>
<dbReference type="GO" id="GO:0008654">
    <property type="term" value="P:phospholipid biosynthetic process"/>
    <property type="evidence" value="ECO:0000266"/>
    <property type="project" value="RGD"/>
</dbReference>
<dbReference type="GO" id="GO:0032006">
    <property type="term" value="P:regulation of TOR signaling"/>
    <property type="evidence" value="ECO:0000266"/>
    <property type="project" value="RGD"/>
</dbReference>
<dbReference type="GO" id="GO:0019432">
    <property type="term" value="P:triglyceride biosynthetic process"/>
    <property type="evidence" value="ECO:0000250"/>
    <property type="project" value="UniProtKB"/>
</dbReference>
<dbReference type="CDD" id="cd07991">
    <property type="entry name" value="LPLAT_LPCAT1-like"/>
    <property type="match status" value="1"/>
</dbReference>
<dbReference type="InterPro" id="IPR045252">
    <property type="entry name" value="LPCAT1-like"/>
</dbReference>
<dbReference type="InterPro" id="IPR002123">
    <property type="entry name" value="Plipid/glycerol_acylTrfase"/>
</dbReference>
<dbReference type="PANTHER" id="PTHR23063:SF10">
    <property type="entry name" value="GLYCEROL-3-PHOSPHATE ACYLTRANSFERASE 3"/>
    <property type="match status" value="1"/>
</dbReference>
<dbReference type="PANTHER" id="PTHR23063">
    <property type="entry name" value="PHOSPHOLIPID ACYLTRANSFERASE"/>
    <property type="match status" value="1"/>
</dbReference>
<dbReference type="Pfam" id="PF01553">
    <property type="entry name" value="Acyltransferase"/>
    <property type="match status" value="1"/>
</dbReference>
<dbReference type="SMART" id="SM00563">
    <property type="entry name" value="PlsC"/>
    <property type="match status" value="1"/>
</dbReference>
<dbReference type="SUPFAM" id="SSF69593">
    <property type="entry name" value="Glycerol-3-phosphate (1)-acyltransferase"/>
    <property type="match status" value="1"/>
</dbReference>
<comment type="function">
    <text evidence="1">Converts glycerol-3-phosphate to 1-acyl-sn-glycerol-3-phosphate (lysophosphatidic acid or LPA) by incorporating an acyl moiety at the sn-1 position of the glycerol backbone. Also converts LPA into 1,2-diacyl-sn-glycerol-3-phosphate (phosphatidic acid or PA) by incorporating an acyl moiety at the sn-2 position of the glycerol backbone. Protects cells against lipotoxicity.</text>
</comment>
<comment type="catalytic activity">
    <reaction evidence="1">
        <text>sn-glycerol 3-phosphate + an acyl-CoA = a 1-acyl-sn-glycero-3-phosphate + CoA</text>
        <dbReference type="Rhea" id="RHEA:15325"/>
        <dbReference type="ChEBI" id="CHEBI:57287"/>
        <dbReference type="ChEBI" id="CHEBI:57597"/>
        <dbReference type="ChEBI" id="CHEBI:57970"/>
        <dbReference type="ChEBI" id="CHEBI:58342"/>
        <dbReference type="EC" id="2.3.1.15"/>
    </reaction>
    <physiologicalReaction direction="left-to-right" evidence="1">
        <dbReference type="Rhea" id="RHEA:15326"/>
    </physiologicalReaction>
</comment>
<comment type="catalytic activity">
    <reaction evidence="1">
        <text>a 1-acyl-sn-glycero-3-phosphate + an acyl-CoA = a 1,2-diacyl-sn-glycero-3-phosphate + CoA</text>
        <dbReference type="Rhea" id="RHEA:19709"/>
        <dbReference type="ChEBI" id="CHEBI:57287"/>
        <dbReference type="ChEBI" id="CHEBI:57970"/>
        <dbReference type="ChEBI" id="CHEBI:58342"/>
        <dbReference type="ChEBI" id="CHEBI:58608"/>
        <dbReference type="EC" id="2.3.1.51"/>
    </reaction>
    <physiologicalReaction direction="left-to-right" evidence="1">
        <dbReference type="Rhea" id="RHEA:19710"/>
    </physiologicalReaction>
</comment>
<comment type="catalytic activity">
    <reaction evidence="1">
        <text>dodecanoyl-CoA + sn-glycerol 3-phosphate = 1-dodecanoyl-sn-glycerol 3-phosphate + CoA</text>
        <dbReference type="Rhea" id="RHEA:35727"/>
        <dbReference type="ChEBI" id="CHEBI:57287"/>
        <dbReference type="ChEBI" id="CHEBI:57375"/>
        <dbReference type="ChEBI" id="CHEBI:57597"/>
        <dbReference type="ChEBI" id="CHEBI:72682"/>
    </reaction>
    <physiologicalReaction direction="left-to-right" evidence="1">
        <dbReference type="Rhea" id="RHEA:35728"/>
    </physiologicalReaction>
</comment>
<comment type="catalytic activity">
    <reaction evidence="1">
        <text>sn-glycerol 3-phosphate + hexadecanoyl-CoA = 1-hexadecanoyl-sn-glycero-3-phosphate + CoA</text>
        <dbReference type="Rhea" id="RHEA:35723"/>
        <dbReference type="ChEBI" id="CHEBI:57287"/>
        <dbReference type="ChEBI" id="CHEBI:57379"/>
        <dbReference type="ChEBI" id="CHEBI:57518"/>
        <dbReference type="ChEBI" id="CHEBI:57597"/>
    </reaction>
    <physiologicalReaction direction="left-to-right" evidence="1">
        <dbReference type="Rhea" id="RHEA:35724"/>
    </physiologicalReaction>
</comment>
<comment type="catalytic activity">
    <reaction evidence="1">
        <text>sn-glycerol 3-phosphate + (9Z)-octadecenoyl-CoA = 1-(9Z-octadecenoyl)-sn-glycero-3-phosphate + CoA</text>
        <dbReference type="Rhea" id="RHEA:37199"/>
        <dbReference type="ChEBI" id="CHEBI:57287"/>
        <dbReference type="ChEBI" id="CHEBI:57387"/>
        <dbReference type="ChEBI" id="CHEBI:57597"/>
        <dbReference type="ChEBI" id="CHEBI:74544"/>
    </reaction>
    <physiologicalReaction direction="left-to-right" evidence="1">
        <dbReference type="Rhea" id="RHEA:37200"/>
    </physiologicalReaction>
</comment>
<comment type="catalytic activity">
    <reaction evidence="1">
        <text>(9Z,12Z)-octadecadienoyl-CoA + sn-glycerol 3-phosphate = 1-(9Z,12Z)-octadecadienoyl-sn-glycero-3-phosphate + CoA</text>
        <dbReference type="Rhea" id="RHEA:37203"/>
        <dbReference type="ChEBI" id="CHEBI:57287"/>
        <dbReference type="ChEBI" id="CHEBI:57383"/>
        <dbReference type="ChEBI" id="CHEBI:57597"/>
        <dbReference type="ChEBI" id="CHEBI:74547"/>
    </reaction>
    <physiologicalReaction direction="left-to-right" evidence="1">
        <dbReference type="Rhea" id="RHEA:37204"/>
    </physiologicalReaction>
</comment>
<comment type="catalytic activity">
    <reaction evidence="1">
        <text>1-tetradecanoyl-sn-glycerol 3-phosphate + (9Z)-octadecenoyl-CoA = 1-tetradecanoyl-2-(9Z)-octadecenoyl-sn-glycero-3-phosphate + CoA</text>
        <dbReference type="Rhea" id="RHEA:37187"/>
        <dbReference type="ChEBI" id="CHEBI:57287"/>
        <dbReference type="ChEBI" id="CHEBI:57387"/>
        <dbReference type="ChEBI" id="CHEBI:72683"/>
        <dbReference type="ChEBI" id="CHEBI:74586"/>
    </reaction>
    <physiologicalReaction direction="left-to-right" evidence="1">
        <dbReference type="Rhea" id="RHEA:37188"/>
    </physiologicalReaction>
</comment>
<comment type="catalytic activity">
    <reaction evidence="1">
        <text>1-hexadecanoyl-sn-glycero-3-phosphate + (9Z)-octadecenoyl-CoA = 1-hexadecanoyl-2-(9Z-octadecenoyl)-sn-glycero-3-phosphate + CoA</text>
        <dbReference type="Rhea" id="RHEA:33187"/>
        <dbReference type="ChEBI" id="CHEBI:57287"/>
        <dbReference type="ChEBI" id="CHEBI:57387"/>
        <dbReference type="ChEBI" id="CHEBI:57518"/>
        <dbReference type="ChEBI" id="CHEBI:64839"/>
    </reaction>
    <physiologicalReaction direction="left-to-right" evidence="1">
        <dbReference type="Rhea" id="RHEA:33188"/>
    </physiologicalReaction>
</comment>
<comment type="catalytic activity">
    <reaction evidence="1">
        <text>1-(9Z-octadecenoyl)-sn-glycero-3-phosphate + (9Z)-octadecenoyl-CoA = 1,2-di-(9Z-octadecenoyl)-sn-glycero-3-phosphate + CoA</text>
        <dbReference type="Rhea" id="RHEA:37131"/>
        <dbReference type="ChEBI" id="CHEBI:57287"/>
        <dbReference type="ChEBI" id="CHEBI:57387"/>
        <dbReference type="ChEBI" id="CHEBI:74544"/>
        <dbReference type="ChEBI" id="CHEBI:74546"/>
    </reaction>
    <physiologicalReaction direction="left-to-right" evidence="1">
        <dbReference type="Rhea" id="RHEA:37132"/>
    </physiologicalReaction>
</comment>
<comment type="catalytic activity">
    <reaction evidence="1">
        <text>1-(6Z,9Z,12Z-octadecatrienoyl)-sn-glycero-3-phosphate + (9Z)-octadecenoyl-CoA = (6Z,9Z,12Z)-octadecatrienoyl-2-(9Z)-octadecenoyl-sn-glycero-3-phosphate + CoA</text>
        <dbReference type="Rhea" id="RHEA:37179"/>
        <dbReference type="ChEBI" id="CHEBI:57287"/>
        <dbReference type="ChEBI" id="CHEBI:57387"/>
        <dbReference type="ChEBI" id="CHEBI:74581"/>
        <dbReference type="ChEBI" id="CHEBI:74582"/>
    </reaction>
    <physiologicalReaction direction="left-to-right" evidence="1">
        <dbReference type="Rhea" id="RHEA:37180"/>
    </physiologicalReaction>
</comment>
<comment type="catalytic activity">
    <reaction evidence="1">
        <text>1-(9Z,12Z,15Z)-octadecatrienoyl-sn-glycero-3-phosphate + (9Z)-octadecenoyl-CoA = 1-(9Z,12Z,15Z)-octadecatrienoyl-2-(9Z)-octadecenoyl-sn-glycero-3-phosphate + CoA</text>
        <dbReference type="Rhea" id="RHEA:37139"/>
        <dbReference type="ChEBI" id="CHEBI:57287"/>
        <dbReference type="ChEBI" id="CHEBI:57387"/>
        <dbReference type="ChEBI" id="CHEBI:74549"/>
        <dbReference type="ChEBI" id="CHEBI:74550"/>
    </reaction>
    <physiologicalReaction direction="left-to-right" evidence="1">
        <dbReference type="Rhea" id="RHEA:37140"/>
    </physiologicalReaction>
</comment>
<comment type="catalytic activity">
    <reaction evidence="1">
        <text>1-(9Z-octadecenoyl)-sn-glycero-3-phosphate + tetradecanoyl-CoA = 1-(9Z)-octadecenoyl-2-tetradecanoyl-sn-glycero-3-phosphate + CoA</text>
        <dbReference type="Rhea" id="RHEA:37171"/>
        <dbReference type="ChEBI" id="CHEBI:57287"/>
        <dbReference type="ChEBI" id="CHEBI:57385"/>
        <dbReference type="ChEBI" id="CHEBI:74544"/>
        <dbReference type="ChEBI" id="CHEBI:74579"/>
    </reaction>
    <physiologicalReaction direction="left-to-right" evidence="1">
        <dbReference type="Rhea" id="RHEA:37172"/>
    </physiologicalReaction>
</comment>
<comment type="catalytic activity">
    <reaction evidence="1">
        <text>1-(9Z-octadecenoyl)-sn-glycero-3-phosphate + hexadecanoyl-CoA = 1-(9Z)-octadecenoyl-2-hexadecanoyl-sn-glycero-3-phosphate + CoA</text>
        <dbReference type="Rhea" id="RHEA:37143"/>
        <dbReference type="ChEBI" id="CHEBI:57287"/>
        <dbReference type="ChEBI" id="CHEBI:57379"/>
        <dbReference type="ChEBI" id="CHEBI:74544"/>
        <dbReference type="ChEBI" id="CHEBI:74551"/>
    </reaction>
    <physiologicalReaction direction="left-to-right" evidence="1">
        <dbReference type="Rhea" id="RHEA:37144"/>
    </physiologicalReaction>
</comment>
<comment type="catalytic activity">
    <reaction evidence="1">
        <text>1-(9Z-octadecenoyl)-sn-glycero-3-phosphate + octadecanoyl-CoA = 1-(9Z-octadecenoyl)-2-octadecanoyl-sn-glycero-3-phosphate + CoA</text>
        <dbReference type="Rhea" id="RHEA:37147"/>
        <dbReference type="ChEBI" id="CHEBI:57287"/>
        <dbReference type="ChEBI" id="CHEBI:57394"/>
        <dbReference type="ChEBI" id="CHEBI:74544"/>
        <dbReference type="ChEBI" id="CHEBI:74552"/>
    </reaction>
    <physiologicalReaction direction="left-to-right" evidence="1">
        <dbReference type="Rhea" id="RHEA:37148"/>
    </physiologicalReaction>
</comment>
<comment type="catalytic activity">
    <reaction evidence="1">
        <text>1-(9Z-octadecenoyl)-sn-glycero-3-phosphate + (9Z,12Z)-octadecadienoyl-CoA = 1-(9Z)-octadecenoyl-2-(9Z,12Z)-octadecadienoyl-sn-glycero-3-phosphate + CoA</text>
        <dbReference type="Rhea" id="RHEA:37159"/>
        <dbReference type="ChEBI" id="CHEBI:57287"/>
        <dbReference type="ChEBI" id="CHEBI:57383"/>
        <dbReference type="ChEBI" id="CHEBI:74544"/>
        <dbReference type="ChEBI" id="CHEBI:74563"/>
    </reaction>
    <physiologicalReaction direction="left-to-right" evidence="1">
        <dbReference type="Rhea" id="RHEA:37160"/>
    </physiologicalReaction>
</comment>
<comment type="catalytic activity">
    <reaction evidence="1">
        <text>1-(5Z,8Z,11Z,14Z-eicosatetraenoyl)-sn-glycero-3-phosphate + (9Z)-octadecenoyl-CoA = 1-(5Z,8Z,11Z,14Z)-eicosatetraenoyl-2-(9Z)-octadecenoyl-sn-glycero-3-phosphate + CoA</text>
        <dbReference type="Rhea" id="RHEA:37455"/>
        <dbReference type="ChEBI" id="CHEBI:57287"/>
        <dbReference type="ChEBI" id="CHEBI:57387"/>
        <dbReference type="ChEBI" id="CHEBI:74938"/>
        <dbReference type="ChEBI" id="CHEBI:74941"/>
    </reaction>
    <physiologicalReaction direction="left-to-right" evidence="1">
        <dbReference type="Rhea" id="RHEA:37456"/>
    </physiologicalReaction>
</comment>
<comment type="pathway">
    <text>Glycerolipid metabolism; triacylglycerol biosynthesis.</text>
</comment>
<comment type="pathway">
    <text>Phospholipid metabolism; CDP-diacylglycerol biosynthesis; CDP-diacylglycerol from sn-glycerol 3-phosphate: step 1/3.</text>
</comment>
<comment type="subcellular location">
    <subcellularLocation>
        <location evidence="1">Endoplasmic reticulum membrane</location>
        <topology evidence="3">Multi-pass membrane protein</topology>
    </subcellularLocation>
</comment>
<comment type="domain">
    <text evidence="2">The HXXXXD motif is essential for acyltransferase activity and may constitute the binding site for the phosphate moiety of the glycerol-3-phosphate.</text>
</comment>
<comment type="similarity">
    <text evidence="5">Belongs to the 1-acyl-sn-glycerol-3-phosphate acyltransferase family.</text>
</comment>
<gene>
    <name evidence="6" type="primary">Gpat3</name>
    <name type="synonym">Agpat9</name>
</gene>
<accession>Q4V8J4</accession>
<sequence>MEGTDLVVKLLSTWLTLVGSLILLPSAFGLSLGISEIYMKILVKTLEWATLRIEKGAPKESVLKSPASMGIIQRDESPMEKGLSGLRGRDFELSDVFYFSKKGLEAIVEDEVTQRFSSEELVSWNLLTRTNVNFHYISPKLTIVWVLGVLVRYCFLLPLRVTLAFIGISLLIIGTTLVGQLPDSSLKNWLSELVHLTCCRICVRSLSGTIHYHNKQYRPQKGGICVANHTSPIDVLILATDGCYAMVGQVHGGLMGIIQRAMVKACPHVWFERSEIKDRHLVTKRLKEHIADKKKLPILIFPEGTCINNTSVMMFKKGSFEIGGTIYPVAIKYNPQFGDAFWNSSKYNLVSYLLRIMTSWAIVCDVWYMPPMTREEGEDAVQFANRVKSAIAVQGGLTELPWDGGLKRAKVKDTFKEEQQKTYSKMIVGNGSPSLALDSSTVDNHGSPEPAFRSESL</sequence>
<keyword id="KW-0012">Acyltransferase</keyword>
<keyword id="KW-0256">Endoplasmic reticulum</keyword>
<keyword id="KW-0444">Lipid biosynthesis</keyword>
<keyword id="KW-0443">Lipid metabolism</keyword>
<keyword id="KW-0472">Membrane</keyword>
<keyword id="KW-0594">Phospholipid biosynthesis</keyword>
<keyword id="KW-1208">Phospholipid metabolism</keyword>
<keyword id="KW-0597">Phosphoprotein</keyword>
<keyword id="KW-1185">Reference proteome</keyword>
<keyword id="KW-0808">Transferase</keyword>
<keyword id="KW-0812">Transmembrane</keyword>
<keyword id="KW-1133">Transmembrane helix</keyword>
<feature type="chain" id="PRO_0000291572" description="Glycerol-3-phosphate acyltransferase 3">
    <location>
        <begin position="1"/>
        <end position="457"/>
    </location>
</feature>
<feature type="transmembrane region" description="Helical" evidence="3">
    <location>
        <begin position="14"/>
        <end position="34"/>
    </location>
</feature>
<feature type="transmembrane region" description="Helical" evidence="3">
    <location>
        <begin position="137"/>
        <end position="157"/>
    </location>
</feature>
<feature type="transmembrane region" description="Helical" evidence="3">
    <location>
        <begin position="161"/>
        <end position="181"/>
    </location>
</feature>
<feature type="region of interest" description="Disordered" evidence="4">
    <location>
        <begin position="429"/>
        <end position="457"/>
    </location>
</feature>
<feature type="short sequence motif" description="HXXXXD motif" evidence="2">
    <location>
        <begin position="229"/>
        <end position="234"/>
    </location>
</feature>
<feature type="compositionally biased region" description="Polar residues" evidence="4">
    <location>
        <begin position="431"/>
        <end position="444"/>
    </location>
</feature>
<feature type="modified residue" description="Phosphoserine" evidence="7">
    <location>
        <position position="68"/>
    </location>
</feature>
<feature type="modified residue" description="Phosphoserine" evidence="1">
    <location>
        <position position="77"/>
    </location>
</feature>
<protein>
    <recommendedName>
        <fullName evidence="6">Glycerol-3-phosphate acyltransferase 3</fullName>
        <shortName>GPAT-3</shortName>
        <ecNumber evidence="1">2.3.1.15</ecNumber>
    </recommendedName>
    <alternativeName>
        <fullName evidence="1">1-acyl-sn-glycerol-3-phosphate O-acyltransferase 10</fullName>
        <shortName evidence="1">AGPAT 10</shortName>
    </alternativeName>
    <alternativeName>
        <fullName>1-acyl-sn-glycerol-3-phosphate O-acyltransferase 9</fullName>
        <shortName>1-AGP acyltransferase 9</shortName>
        <shortName>1-AGPAT 9</shortName>
        <ecNumber evidence="1">2.3.1.51</ecNumber>
    </alternativeName>
    <alternativeName>
        <fullName>Lysophosphatidic acid acyltransferase theta</fullName>
        <shortName>LPAAT-theta</shortName>
    </alternativeName>
</protein>